<accession>Q54C71</accession>
<reference evidence="10" key="1">
    <citation type="journal article" date="2005" name="Nature">
        <title>The genome of the social amoeba Dictyostelium discoideum.</title>
        <authorList>
            <person name="Eichinger L."/>
            <person name="Pachebat J.A."/>
            <person name="Gloeckner G."/>
            <person name="Rajandream M.A."/>
            <person name="Sucgang R."/>
            <person name="Berriman M."/>
            <person name="Song J."/>
            <person name="Olsen R."/>
            <person name="Szafranski K."/>
            <person name="Xu Q."/>
            <person name="Tunggal B."/>
            <person name="Kummerfeld S."/>
            <person name="Madera M."/>
            <person name="Konfortov B.A."/>
            <person name="Rivero F."/>
            <person name="Bankier A.T."/>
            <person name="Lehmann R."/>
            <person name="Hamlin N."/>
            <person name="Davies R."/>
            <person name="Gaudet P."/>
            <person name="Fey P."/>
            <person name="Pilcher K."/>
            <person name="Chen G."/>
            <person name="Saunders D."/>
            <person name="Sodergren E.J."/>
            <person name="Davis P."/>
            <person name="Kerhornou A."/>
            <person name="Nie X."/>
            <person name="Hall N."/>
            <person name="Anjard C."/>
            <person name="Hemphill L."/>
            <person name="Bason N."/>
            <person name="Farbrother P."/>
            <person name="Desany B."/>
            <person name="Just E."/>
            <person name="Morio T."/>
            <person name="Rost R."/>
            <person name="Churcher C.M."/>
            <person name="Cooper J."/>
            <person name="Haydock S."/>
            <person name="van Driessche N."/>
            <person name="Cronin A."/>
            <person name="Goodhead I."/>
            <person name="Muzny D.M."/>
            <person name="Mourier T."/>
            <person name="Pain A."/>
            <person name="Lu M."/>
            <person name="Harper D."/>
            <person name="Lindsay R."/>
            <person name="Hauser H."/>
            <person name="James K.D."/>
            <person name="Quiles M."/>
            <person name="Madan Babu M."/>
            <person name="Saito T."/>
            <person name="Buchrieser C."/>
            <person name="Wardroper A."/>
            <person name="Felder M."/>
            <person name="Thangavelu M."/>
            <person name="Johnson D."/>
            <person name="Knights A."/>
            <person name="Loulseged H."/>
            <person name="Mungall K.L."/>
            <person name="Oliver K."/>
            <person name="Price C."/>
            <person name="Quail M.A."/>
            <person name="Urushihara H."/>
            <person name="Hernandez J."/>
            <person name="Rabbinowitsch E."/>
            <person name="Steffen D."/>
            <person name="Sanders M."/>
            <person name="Ma J."/>
            <person name="Kohara Y."/>
            <person name="Sharp S."/>
            <person name="Simmonds M.N."/>
            <person name="Spiegler S."/>
            <person name="Tivey A."/>
            <person name="Sugano S."/>
            <person name="White B."/>
            <person name="Walker D."/>
            <person name="Woodward J.R."/>
            <person name="Winckler T."/>
            <person name="Tanaka Y."/>
            <person name="Shaulsky G."/>
            <person name="Schleicher M."/>
            <person name="Weinstock G.M."/>
            <person name="Rosenthal A."/>
            <person name="Cox E.C."/>
            <person name="Chisholm R.L."/>
            <person name="Gibbs R.A."/>
            <person name="Loomis W.F."/>
            <person name="Platzer M."/>
            <person name="Kay R.R."/>
            <person name="Williams J.G."/>
            <person name="Dear P.H."/>
            <person name="Noegel A.A."/>
            <person name="Barrell B.G."/>
            <person name="Kuspa A."/>
        </authorList>
    </citation>
    <scope>NUCLEOTIDE SEQUENCE [LARGE SCALE GENOMIC DNA]</scope>
    <source>
        <strain>AX4</strain>
    </source>
</reference>
<reference evidence="9" key="2">
    <citation type="journal article" date="2006" name="Eur. J. Cell Biol.">
        <title>Rho GTPase signaling in Dictyostelium discoideum: insights from the genome.</title>
        <authorList>
            <person name="Vlahou G."/>
            <person name="Rivero F."/>
        </authorList>
    </citation>
    <scope>IDENTIFICATION</scope>
</reference>
<keyword id="KW-0067">ATP-binding</keyword>
<keyword id="KW-0343">GTPase activation</keyword>
<keyword id="KW-0418">Kinase</keyword>
<keyword id="KW-0460">Magnesium</keyword>
<keyword id="KW-0479">Metal-binding</keyword>
<keyword id="KW-0547">Nucleotide-binding</keyword>
<keyword id="KW-1185">Reference proteome</keyword>
<keyword id="KW-0723">Serine/threonine-protein kinase</keyword>
<keyword id="KW-0808">Transferase</keyword>
<feature type="chain" id="PRO_0000371249" description="Kinase and exchange factor for Rac B">
    <location>
        <begin position="1"/>
        <end position="1125"/>
    </location>
</feature>
<feature type="domain" description="DH" evidence="3">
    <location>
        <begin position="380"/>
        <end position="571"/>
    </location>
</feature>
<feature type="domain" description="PH" evidence="4">
    <location>
        <begin position="601"/>
        <end position="822"/>
    </location>
</feature>
<feature type="domain" description="Protein kinase" evidence="5">
    <location>
        <begin position="848"/>
        <end position="1117"/>
    </location>
</feature>
<feature type="region of interest" description="Disordered" evidence="7">
    <location>
        <begin position="50"/>
        <end position="175"/>
    </location>
</feature>
<feature type="region of interest" description="Disordered" evidence="7">
    <location>
        <begin position="247"/>
        <end position="287"/>
    </location>
</feature>
<feature type="region of interest" description="Disordered" evidence="7">
    <location>
        <begin position="322"/>
        <end position="362"/>
    </location>
</feature>
<feature type="region of interest" description="Disordered" evidence="7">
    <location>
        <begin position="693"/>
        <end position="729"/>
    </location>
</feature>
<feature type="region of interest" description="Disordered" evidence="7">
    <location>
        <begin position="761"/>
        <end position="791"/>
    </location>
</feature>
<feature type="compositionally biased region" description="Low complexity" evidence="7">
    <location>
        <begin position="59"/>
        <end position="91"/>
    </location>
</feature>
<feature type="compositionally biased region" description="Polar residues" evidence="7">
    <location>
        <begin position="92"/>
        <end position="106"/>
    </location>
</feature>
<feature type="compositionally biased region" description="Pro residues" evidence="7">
    <location>
        <begin position="113"/>
        <end position="124"/>
    </location>
</feature>
<feature type="compositionally biased region" description="Low complexity" evidence="7">
    <location>
        <begin position="137"/>
        <end position="161"/>
    </location>
</feature>
<feature type="compositionally biased region" description="Low complexity" evidence="7">
    <location>
        <begin position="694"/>
        <end position="729"/>
    </location>
</feature>
<feature type="active site" description="Proton acceptor" evidence="1 5 6">
    <location>
        <position position="971"/>
    </location>
</feature>
<feature type="binding site" evidence="1 5">
    <location>
        <begin position="854"/>
        <end position="862"/>
    </location>
    <ligand>
        <name>ATP</name>
        <dbReference type="ChEBI" id="CHEBI:30616"/>
    </ligand>
</feature>
<feature type="binding site" evidence="1 5">
    <location>
        <position position="876"/>
    </location>
    <ligand>
        <name>ATP</name>
        <dbReference type="ChEBI" id="CHEBI:30616"/>
    </ligand>
</feature>
<organism>
    <name type="scientific">Dictyostelium discoideum</name>
    <name type="common">Social amoeba</name>
    <dbReference type="NCBI Taxonomy" id="44689"/>
    <lineage>
        <taxon>Eukaryota</taxon>
        <taxon>Amoebozoa</taxon>
        <taxon>Evosea</taxon>
        <taxon>Eumycetozoa</taxon>
        <taxon>Dictyostelia</taxon>
        <taxon>Dictyosteliales</taxon>
        <taxon>Dictyosteliaceae</taxon>
        <taxon>Dictyostelium</taxon>
    </lineage>
</organism>
<comment type="catalytic activity">
    <reaction evidence="2">
        <text>L-seryl-[protein] + ATP = O-phospho-L-seryl-[protein] + ADP + H(+)</text>
        <dbReference type="Rhea" id="RHEA:17989"/>
        <dbReference type="Rhea" id="RHEA-COMP:9863"/>
        <dbReference type="Rhea" id="RHEA-COMP:11604"/>
        <dbReference type="ChEBI" id="CHEBI:15378"/>
        <dbReference type="ChEBI" id="CHEBI:29999"/>
        <dbReference type="ChEBI" id="CHEBI:30616"/>
        <dbReference type="ChEBI" id="CHEBI:83421"/>
        <dbReference type="ChEBI" id="CHEBI:456216"/>
        <dbReference type="EC" id="2.7.11.1"/>
    </reaction>
</comment>
<comment type="catalytic activity">
    <reaction evidence="2">
        <text>L-threonyl-[protein] + ATP = O-phospho-L-threonyl-[protein] + ADP + H(+)</text>
        <dbReference type="Rhea" id="RHEA:46608"/>
        <dbReference type="Rhea" id="RHEA-COMP:11060"/>
        <dbReference type="Rhea" id="RHEA-COMP:11605"/>
        <dbReference type="ChEBI" id="CHEBI:15378"/>
        <dbReference type="ChEBI" id="CHEBI:30013"/>
        <dbReference type="ChEBI" id="CHEBI:30616"/>
        <dbReference type="ChEBI" id="CHEBI:61977"/>
        <dbReference type="ChEBI" id="CHEBI:456216"/>
        <dbReference type="EC" id="2.7.11.1"/>
    </reaction>
</comment>
<comment type="cofactor">
    <cofactor evidence="2">
        <name>Mg(2+)</name>
        <dbReference type="ChEBI" id="CHEBI:18420"/>
    </cofactor>
</comment>
<comment type="similarity">
    <text evidence="2">Belongs to the protein kinase superfamily. STE Ser/Thr protein kinase family.</text>
</comment>
<evidence type="ECO:0000250" key="1">
    <source>
        <dbReference type="UniProtKB" id="P28523"/>
    </source>
</evidence>
<evidence type="ECO:0000250" key="2">
    <source>
        <dbReference type="UniProtKB" id="Q869N2"/>
    </source>
</evidence>
<evidence type="ECO:0000255" key="3">
    <source>
        <dbReference type="PROSITE-ProRule" id="PRU00062"/>
    </source>
</evidence>
<evidence type="ECO:0000255" key="4">
    <source>
        <dbReference type="PROSITE-ProRule" id="PRU00145"/>
    </source>
</evidence>
<evidence type="ECO:0000255" key="5">
    <source>
        <dbReference type="PROSITE-ProRule" id="PRU00159"/>
    </source>
</evidence>
<evidence type="ECO:0000255" key="6">
    <source>
        <dbReference type="PROSITE-ProRule" id="PRU10027"/>
    </source>
</evidence>
<evidence type="ECO:0000256" key="7">
    <source>
        <dbReference type="SAM" id="MobiDB-lite"/>
    </source>
</evidence>
<evidence type="ECO:0000303" key="8">
    <source>
    </source>
</evidence>
<evidence type="ECO:0000305" key="9"/>
<evidence type="ECO:0000312" key="10">
    <source>
        <dbReference type="EMBL" id="EAL60914.1"/>
    </source>
</evidence>
<proteinExistence type="inferred from homology"/>
<protein>
    <recommendedName>
        <fullName evidence="8">Kinase and exchange factor for Rac B</fullName>
        <ecNumber>2.7.11.1</ecNumber>
    </recommendedName>
    <alternativeName>
        <fullName evidence="10">Serine/threonine-protein kinase kxcB</fullName>
    </alternativeName>
</protein>
<sequence>MELSEPKQRFESLLSLFEDVANKRYSGDFSVKKNINAPQVPPRSYSLFNVTGGNVSSYNNQQQQQNNNNNNNNNNNNNNNNNNNNNNNNNNSGEISSNNSTPSILFSPTPTSTAPPAPPQPTTPPNTGFHNRPLSININQQPIGGVNNNNNNNNKDSPSNKPLRLSGSPPTASINGNQIEQLQRELRNEKEAHQQTKYLLNSFADENKKLSNDCQLWRAKYFKLLTKNTKLKVIFDHFQSIMNESDSVPGEGSLVHSTSYNSSSSSSSGGGGNITPRKLSLAGGGKFDDAPQSASALLKIHHQRNQSTGSAFSNTIYNGEEKTRDTISYNERPKRQTVGSSTFFPPPPSRATSTSSIQVNSDPQEIEQLTEEQYLEMLEKRRQVSLQILQTEKEYAFYLNIIVEEFLQPLKNESNLSNNPFISKAQVKQLFGDTEVILGSSKLLAEDLENVLLDGTSNPIGLGDCFLKICDYFKLYASYVKNYYTSISVLNKLKEESHKFQAFIQEKEQILLDSNFTDLGALLVLPVSRIGQYTSMINYLFSLTPQSHPDYEPFKKAVIKMKSTVDYVKEKIRDNDSQNKVRIIQNQMTGKFENLNLPHRRYVREGMLTESGKGSNSNQYYCFLFNDIFVLSTPIKKSNQFSFKKKISLSEAEVTMISDPEDRPIFQISIQNIDSQQDNSPNMLSLNGIQNAINNMTNNDSKSKNNNNNNSNGNNNNNNINSNSNSNNNSVIDIKSSGVLINNGGGSGFISNNNGITNVNSNNNNNNNINSNNNINGNNNNGNNSVNYSNGEDNNDRECFTFIADSNRDREDWIQAIHANIISSKKRNETRKPEDIEKGGIDFSVSDIKLCEQIGSGGSGCTVHRCTVDGFTCAVKVLKLKNTSPFLVEQFISEITIMVKLSHQNIAKYLGHRLSGNQLWLFMEFYPHSLKDVITKRTSPFPATEVIWMALEIAKGLEFLHTQKNPIIHRDLKPGNIMCSLDDKGRVCSIRVCDFDTSKELGNGVTLKTCIGTPCYMAAEVLNVADGGNSGYSLKADIWSFAMLCFEIISLLPPYHQFQHLQSIEMIINGTCPPLPTDLIQPKLLQPLIELLVTCIDLNPNHRPNASQLVQKLTKMLKNTGMMTE</sequence>
<dbReference type="EC" id="2.7.11.1"/>
<dbReference type="EMBL" id="AAFI02000199">
    <property type="protein sequence ID" value="EAL60914.1"/>
    <property type="molecule type" value="Genomic_DNA"/>
</dbReference>
<dbReference type="RefSeq" id="XP_629348.1">
    <property type="nucleotide sequence ID" value="XM_629346.1"/>
</dbReference>
<dbReference type="SMR" id="Q54C71"/>
<dbReference type="FunCoup" id="Q54C71">
    <property type="interactions" value="617"/>
</dbReference>
<dbReference type="STRING" id="44689.Q54C71"/>
<dbReference type="GlyGen" id="Q54C71">
    <property type="glycosylation" value="2 sites"/>
</dbReference>
<dbReference type="PaxDb" id="44689-DDB0229973"/>
<dbReference type="EnsemblProtists" id="EAL60914">
    <property type="protein sequence ID" value="EAL60914"/>
    <property type="gene ID" value="DDB_G0293124"/>
</dbReference>
<dbReference type="GeneID" id="8629072"/>
<dbReference type="KEGG" id="ddi:DDB_G0293124"/>
<dbReference type="dictyBase" id="DDB_G0293124">
    <property type="gene designation" value="kxcB"/>
</dbReference>
<dbReference type="VEuPathDB" id="AmoebaDB:DDB_G0293124"/>
<dbReference type="eggNOG" id="KOG0192">
    <property type="taxonomic scope" value="Eukaryota"/>
</dbReference>
<dbReference type="eggNOG" id="KOG4424">
    <property type="taxonomic scope" value="Eukaryota"/>
</dbReference>
<dbReference type="HOGENOM" id="CLU_279836_0_0_1"/>
<dbReference type="InParanoid" id="Q54C71"/>
<dbReference type="OMA" id="TPCYMAA"/>
<dbReference type="Reactome" id="R-DDI-5673000">
    <property type="pathway name" value="RAF activation"/>
</dbReference>
<dbReference type="Reactome" id="R-DDI-5675221">
    <property type="pathway name" value="Negative regulation of MAPK pathway"/>
</dbReference>
<dbReference type="PRO" id="PR:Q54C71"/>
<dbReference type="Proteomes" id="UP000002195">
    <property type="component" value="Chromosome 6"/>
</dbReference>
<dbReference type="GO" id="GO:0005737">
    <property type="term" value="C:cytoplasm"/>
    <property type="evidence" value="ECO:0000318"/>
    <property type="project" value="GO_Central"/>
</dbReference>
<dbReference type="GO" id="GO:0005524">
    <property type="term" value="F:ATP binding"/>
    <property type="evidence" value="ECO:0007669"/>
    <property type="project" value="UniProtKB-KW"/>
</dbReference>
<dbReference type="GO" id="GO:0005096">
    <property type="term" value="F:GTPase activator activity"/>
    <property type="evidence" value="ECO:0007669"/>
    <property type="project" value="UniProtKB-KW"/>
</dbReference>
<dbReference type="GO" id="GO:0005085">
    <property type="term" value="F:guanyl-nucleotide exchange factor activity"/>
    <property type="evidence" value="ECO:0007669"/>
    <property type="project" value="InterPro"/>
</dbReference>
<dbReference type="GO" id="GO:0046872">
    <property type="term" value="F:metal ion binding"/>
    <property type="evidence" value="ECO:0007669"/>
    <property type="project" value="UniProtKB-KW"/>
</dbReference>
<dbReference type="GO" id="GO:0004672">
    <property type="term" value="F:protein kinase activity"/>
    <property type="evidence" value="ECO:0000318"/>
    <property type="project" value="GO_Central"/>
</dbReference>
<dbReference type="GO" id="GO:0106310">
    <property type="term" value="F:protein serine kinase activity"/>
    <property type="evidence" value="ECO:0007669"/>
    <property type="project" value="RHEA"/>
</dbReference>
<dbReference type="GO" id="GO:0004674">
    <property type="term" value="F:protein serine/threonine kinase activity"/>
    <property type="evidence" value="ECO:0007669"/>
    <property type="project" value="UniProtKB-KW"/>
</dbReference>
<dbReference type="GO" id="GO:0007165">
    <property type="term" value="P:signal transduction"/>
    <property type="evidence" value="ECO:0000318"/>
    <property type="project" value="GO_Central"/>
</dbReference>
<dbReference type="CDD" id="cd00160">
    <property type="entry name" value="RhoGEF"/>
    <property type="match status" value="1"/>
</dbReference>
<dbReference type="Gene3D" id="1.20.900.10">
    <property type="entry name" value="Dbl homology (DH) domain"/>
    <property type="match status" value="1"/>
</dbReference>
<dbReference type="Gene3D" id="3.30.200.20">
    <property type="entry name" value="Phosphorylase Kinase, domain 1"/>
    <property type="match status" value="1"/>
</dbReference>
<dbReference type="Gene3D" id="2.30.29.30">
    <property type="entry name" value="Pleckstrin-homology domain (PH domain)/Phosphotyrosine-binding domain (PTB)"/>
    <property type="match status" value="1"/>
</dbReference>
<dbReference type="Gene3D" id="1.10.510.10">
    <property type="entry name" value="Transferase(Phosphotransferase) domain 1"/>
    <property type="match status" value="1"/>
</dbReference>
<dbReference type="InterPro" id="IPR035899">
    <property type="entry name" value="DBL_dom_sf"/>
</dbReference>
<dbReference type="InterPro" id="IPR000219">
    <property type="entry name" value="DH_dom"/>
</dbReference>
<dbReference type="InterPro" id="IPR051092">
    <property type="entry name" value="FYVE_RhoGEF_PH"/>
</dbReference>
<dbReference type="InterPro" id="IPR011009">
    <property type="entry name" value="Kinase-like_dom_sf"/>
</dbReference>
<dbReference type="InterPro" id="IPR011993">
    <property type="entry name" value="PH-like_dom_sf"/>
</dbReference>
<dbReference type="InterPro" id="IPR001849">
    <property type="entry name" value="PH_domain"/>
</dbReference>
<dbReference type="InterPro" id="IPR000719">
    <property type="entry name" value="Prot_kinase_dom"/>
</dbReference>
<dbReference type="InterPro" id="IPR008271">
    <property type="entry name" value="Ser/Thr_kinase_AS"/>
</dbReference>
<dbReference type="PANTHER" id="PTHR12673:SF251">
    <property type="entry name" value="DH DOMAIN-CONTAINING PROTEIN-RELATED"/>
    <property type="match status" value="1"/>
</dbReference>
<dbReference type="PANTHER" id="PTHR12673">
    <property type="entry name" value="FACIOGENITAL DYSPLASIA PROTEIN"/>
    <property type="match status" value="1"/>
</dbReference>
<dbReference type="Pfam" id="PF00069">
    <property type="entry name" value="Pkinase"/>
    <property type="match status" value="1"/>
</dbReference>
<dbReference type="Pfam" id="PF00621">
    <property type="entry name" value="RhoGEF"/>
    <property type="match status" value="1"/>
</dbReference>
<dbReference type="SMART" id="SM00233">
    <property type="entry name" value="PH"/>
    <property type="match status" value="1"/>
</dbReference>
<dbReference type="SMART" id="SM00325">
    <property type="entry name" value="RhoGEF"/>
    <property type="match status" value="1"/>
</dbReference>
<dbReference type="SMART" id="SM00220">
    <property type="entry name" value="S_TKc"/>
    <property type="match status" value="1"/>
</dbReference>
<dbReference type="SUPFAM" id="SSF48065">
    <property type="entry name" value="DBL homology domain (DH-domain)"/>
    <property type="match status" value="1"/>
</dbReference>
<dbReference type="SUPFAM" id="SSF50729">
    <property type="entry name" value="PH domain-like"/>
    <property type="match status" value="1"/>
</dbReference>
<dbReference type="SUPFAM" id="SSF56112">
    <property type="entry name" value="Protein kinase-like (PK-like)"/>
    <property type="match status" value="1"/>
</dbReference>
<dbReference type="PROSITE" id="PS50010">
    <property type="entry name" value="DH_2"/>
    <property type="match status" value="1"/>
</dbReference>
<dbReference type="PROSITE" id="PS50003">
    <property type="entry name" value="PH_DOMAIN"/>
    <property type="match status" value="1"/>
</dbReference>
<dbReference type="PROSITE" id="PS50011">
    <property type="entry name" value="PROTEIN_KINASE_DOM"/>
    <property type="match status" value="1"/>
</dbReference>
<dbReference type="PROSITE" id="PS00108">
    <property type="entry name" value="PROTEIN_KINASE_ST"/>
    <property type="match status" value="1"/>
</dbReference>
<name>KXCB_DICDI</name>
<gene>
    <name evidence="10" type="primary">kxcB</name>
    <name type="synonym">RacGEF</name>
    <name type="ORF">DDB_G0293124</name>
</gene>